<name>ROCA_STAAC</name>
<keyword id="KW-0520">NAD</keyword>
<keyword id="KW-0560">Oxidoreductase</keyword>
<evidence type="ECO:0000255" key="1">
    <source>
        <dbReference type="HAMAP-Rule" id="MF_00733"/>
    </source>
</evidence>
<dbReference type="EC" id="1.2.1.88" evidence="1"/>
<dbReference type="EMBL" id="CP000046">
    <property type="protein sequence ID" value="AAW38571.1"/>
    <property type="molecule type" value="Genomic_DNA"/>
</dbReference>
<dbReference type="SMR" id="Q5HCZ6"/>
<dbReference type="KEGG" id="sac:SACOL2569"/>
<dbReference type="HOGENOM" id="CLU_005391_0_0_9"/>
<dbReference type="UniPathway" id="UPA00261">
    <property type="reaction ID" value="UER00374"/>
</dbReference>
<dbReference type="Proteomes" id="UP000000530">
    <property type="component" value="Chromosome"/>
</dbReference>
<dbReference type="GO" id="GO:0009898">
    <property type="term" value="C:cytoplasmic side of plasma membrane"/>
    <property type="evidence" value="ECO:0007669"/>
    <property type="project" value="TreeGrafter"/>
</dbReference>
<dbReference type="GO" id="GO:0003842">
    <property type="term" value="F:1-pyrroline-5-carboxylate dehydrogenase activity"/>
    <property type="evidence" value="ECO:0007669"/>
    <property type="project" value="UniProtKB-UniRule"/>
</dbReference>
<dbReference type="GO" id="GO:0006537">
    <property type="term" value="P:glutamate biosynthetic process"/>
    <property type="evidence" value="ECO:0007669"/>
    <property type="project" value="UniProtKB-UniRule"/>
</dbReference>
<dbReference type="GO" id="GO:0010133">
    <property type="term" value="P:proline catabolic process to glutamate"/>
    <property type="evidence" value="ECO:0007669"/>
    <property type="project" value="UniProtKB-UniPathway"/>
</dbReference>
<dbReference type="CDD" id="cd07124">
    <property type="entry name" value="ALDH_PutA-P5CDH-RocA"/>
    <property type="match status" value="1"/>
</dbReference>
<dbReference type="FunFam" id="3.40.309.10:FF:000005">
    <property type="entry name" value="1-pyrroline-5-carboxylate dehydrogenase 1"/>
    <property type="match status" value="1"/>
</dbReference>
<dbReference type="FunFam" id="3.40.605.10:FF:000045">
    <property type="entry name" value="1-pyrroline-5-carboxylate dehydrogenase 1"/>
    <property type="match status" value="1"/>
</dbReference>
<dbReference type="Gene3D" id="3.40.605.10">
    <property type="entry name" value="Aldehyde Dehydrogenase, Chain A, domain 1"/>
    <property type="match status" value="1"/>
</dbReference>
<dbReference type="Gene3D" id="3.40.309.10">
    <property type="entry name" value="Aldehyde Dehydrogenase, Chain A, domain 2"/>
    <property type="match status" value="1"/>
</dbReference>
<dbReference type="HAMAP" id="MF_00733">
    <property type="entry name" value="RocA"/>
    <property type="match status" value="1"/>
</dbReference>
<dbReference type="InterPro" id="IPR016161">
    <property type="entry name" value="Ald_DH/histidinol_DH"/>
</dbReference>
<dbReference type="InterPro" id="IPR016163">
    <property type="entry name" value="Ald_DH_C"/>
</dbReference>
<dbReference type="InterPro" id="IPR016160">
    <property type="entry name" value="Ald_DH_CS_CYS"/>
</dbReference>
<dbReference type="InterPro" id="IPR029510">
    <property type="entry name" value="Ald_DH_CS_GLU"/>
</dbReference>
<dbReference type="InterPro" id="IPR016162">
    <property type="entry name" value="Ald_DH_N"/>
</dbReference>
<dbReference type="InterPro" id="IPR015590">
    <property type="entry name" value="Aldehyde_DH_dom"/>
</dbReference>
<dbReference type="InterPro" id="IPR050485">
    <property type="entry name" value="Proline_metab_enzyme"/>
</dbReference>
<dbReference type="InterPro" id="IPR005932">
    <property type="entry name" value="RocA"/>
</dbReference>
<dbReference type="InterPro" id="IPR047597">
    <property type="entry name" value="RocA_bacillales"/>
</dbReference>
<dbReference type="NCBIfam" id="TIGR01237">
    <property type="entry name" value="D1pyr5carbox2"/>
    <property type="match status" value="1"/>
</dbReference>
<dbReference type="NCBIfam" id="NF002852">
    <property type="entry name" value="PRK03137.1"/>
    <property type="match status" value="1"/>
</dbReference>
<dbReference type="PANTHER" id="PTHR42862">
    <property type="entry name" value="DELTA-1-PYRROLINE-5-CARBOXYLATE DEHYDROGENASE 1, ISOFORM A-RELATED"/>
    <property type="match status" value="1"/>
</dbReference>
<dbReference type="PANTHER" id="PTHR42862:SF1">
    <property type="entry name" value="DELTA-1-PYRROLINE-5-CARBOXYLATE DEHYDROGENASE 2, ISOFORM A-RELATED"/>
    <property type="match status" value="1"/>
</dbReference>
<dbReference type="Pfam" id="PF00171">
    <property type="entry name" value="Aldedh"/>
    <property type="match status" value="1"/>
</dbReference>
<dbReference type="SUPFAM" id="SSF53720">
    <property type="entry name" value="ALDH-like"/>
    <property type="match status" value="1"/>
</dbReference>
<dbReference type="PROSITE" id="PS00070">
    <property type="entry name" value="ALDEHYDE_DEHYDR_CYS"/>
    <property type="match status" value="1"/>
</dbReference>
<dbReference type="PROSITE" id="PS00687">
    <property type="entry name" value="ALDEHYDE_DEHYDR_GLU"/>
    <property type="match status" value="1"/>
</dbReference>
<reference key="1">
    <citation type="journal article" date="2005" name="J. Bacteriol.">
        <title>Insights on evolution of virulence and resistance from the complete genome analysis of an early methicillin-resistant Staphylococcus aureus strain and a biofilm-producing methicillin-resistant Staphylococcus epidermidis strain.</title>
        <authorList>
            <person name="Gill S.R."/>
            <person name="Fouts D.E."/>
            <person name="Archer G.L."/>
            <person name="Mongodin E.F."/>
            <person name="DeBoy R.T."/>
            <person name="Ravel J."/>
            <person name="Paulsen I.T."/>
            <person name="Kolonay J.F."/>
            <person name="Brinkac L.M."/>
            <person name="Beanan M.J."/>
            <person name="Dodson R.J."/>
            <person name="Daugherty S.C."/>
            <person name="Madupu R."/>
            <person name="Angiuoli S.V."/>
            <person name="Durkin A.S."/>
            <person name="Haft D.H."/>
            <person name="Vamathevan J.J."/>
            <person name="Khouri H."/>
            <person name="Utterback T.R."/>
            <person name="Lee C."/>
            <person name="Dimitrov G."/>
            <person name="Jiang L."/>
            <person name="Qin H."/>
            <person name="Weidman J."/>
            <person name="Tran K."/>
            <person name="Kang K.H."/>
            <person name="Hance I.R."/>
            <person name="Nelson K.E."/>
            <person name="Fraser C.M."/>
        </authorList>
    </citation>
    <scope>NUCLEOTIDE SEQUENCE [LARGE SCALE GENOMIC DNA]</scope>
    <source>
        <strain>COL</strain>
    </source>
</reference>
<sequence>MVVEFKNEPGYDFSVQENVDMFKKALKDVEKELGQDIPLVINGEKIFKDDKIKSINPADTSQVIANASKATKQDVEDAFKAANEAYKSWKTWSANDRAELMLRVSAIIRRRKAEIAAIMVYEAGKPWDEAVGDAAEGIDFIEYYARSMMDLAQGKPVLDREGEHNKYFYKSIGTGVTIPPWNFPFAIMAGTTLAPVVAGNTVLLKPAEDTPYIAYKLMEILEEAGLPKGVVNFVPGDPKEIGDYLVDHKDTHFVTFTGSRATGTRIYERSAVVQEGQNFLKRVIAEMGGKDAIVVDENIDTDMAAEAIVTSAFGFSGQKCSACSRAIVHKDVYDEVLEKSIKLTKELTLGNTVDNTYMGPVINKKQFDKIKNYIEIGKEEGKLEQGGGTDDSKGYFVEPTIISGLKSKDRIMQEEIFGPVVGFVKVNDFDEAIEVANDTDYGLTGAVITNNREHWIKAVNEFDVGNLYLNRGCTSAVVGYHPFGGFKMSGTDAKTGSPDYLLHFLEQKVVSEMF</sequence>
<gene>
    <name evidence="1" type="primary">rocA</name>
    <name type="ordered locus">SACOL2569</name>
</gene>
<feature type="chain" id="PRO_0000056514" description="1-pyrroline-5-carboxylate dehydrogenase">
    <location>
        <begin position="1"/>
        <end position="514"/>
    </location>
</feature>
<feature type="active site" evidence="1">
    <location>
        <position position="286"/>
    </location>
</feature>
<feature type="active site" evidence="1">
    <location>
        <position position="320"/>
    </location>
</feature>
<accession>Q5HCZ6</accession>
<proteinExistence type="inferred from homology"/>
<organism>
    <name type="scientific">Staphylococcus aureus (strain COL)</name>
    <dbReference type="NCBI Taxonomy" id="93062"/>
    <lineage>
        <taxon>Bacteria</taxon>
        <taxon>Bacillati</taxon>
        <taxon>Bacillota</taxon>
        <taxon>Bacilli</taxon>
        <taxon>Bacillales</taxon>
        <taxon>Staphylococcaceae</taxon>
        <taxon>Staphylococcus</taxon>
    </lineage>
</organism>
<comment type="catalytic activity">
    <reaction evidence="1">
        <text>L-glutamate 5-semialdehyde + NAD(+) + H2O = L-glutamate + NADH + 2 H(+)</text>
        <dbReference type="Rhea" id="RHEA:30235"/>
        <dbReference type="ChEBI" id="CHEBI:15377"/>
        <dbReference type="ChEBI" id="CHEBI:15378"/>
        <dbReference type="ChEBI" id="CHEBI:29985"/>
        <dbReference type="ChEBI" id="CHEBI:57540"/>
        <dbReference type="ChEBI" id="CHEBI:57945"/>
        <dbReference type="ChEBI" id="CHEBI:58066"/>
        <dbReference type="EC" id="1.2.1.88"/>
    </reaction>
</comment>
<comment type="pathway">
    <text evidence="1">Amino-acid degradation; L-proline degradation into L-glutamate; L-glutamate from L-proline: step 2/2.</text>
</comment>
<comment type="similarity">
    <text evidence="1">Belongs to the aldehyde dehydrogenase family. RocA subfamily.</text>
</comment>
<protein>
    <recommendedName>
        <fullName evidence="1">1-pyrroline-5-carboxylate dehydrogenase</fullName>
        <shortName evidence="1">P5C dehydrogenase</shortName>
        <ecNumber evidence="1">1.2.1.88</ecNumber>
    </recommendedName>
    <alternativeName>
        <fullName evidence="1">L-glutamate gamma-semialdehyde dehydrogenase</fullName>
    </alternativeName>
</protein>